<feature type="signal peptide" evidence="1">
    <location>
        <begin position="1"/>
        <end position="36"/>
    </location>
</feature>
<feature type="chain" id="PRO_0000272665" description="Immunodominant staphylococcal antigen B">
    <location>
        <begin position="37"/>
        <end position="175"/>
    </location>
</feature>
<name>ISAB_STAAC</name>
<gene>
    <name type="primary">isaB</name>
    <name type="ordered locus">SACOL2660</name>
</gene>
<dbReference type="EMBL" id="CP000046">
    <property type="protein sequence ID" value="AAW38658.1"/>
    <property type="molecule type" value="Genomic_DNA"/>
</dbReference>
<dbReference type="RefSeq" id="WP_001044560.1">
    <property type="nucleotide sequence ID" value="NZ_JBGOFO010000001.1"/>
</dbReference>
<dbReference type="SMR" id="Q5HCQ9"/>
<dbReference type="KEGG" id="sac:SACOL2660"/>
<dbReference type="HOGENOM" id="CLU_119552_0_0_9"/>
<dbReference type="Proteomes" id="UP000000530">
    <property type="component" value="Chromosome"/>
</dbReference>
<dbReference type="GO" id="GO:0005576">
    <property type="term" value="C:extracellular region"/>
    <property type="evidence" value="ECO:0007669"/>
    <property type="project" value="UniProtKB-SubCell"/>
</dbReference>
<dbReference type="NCBIfam" id="NF047686">
    <property type="entry name" value="IsaB_fam"/>
    <property type="match status" value="1"/>
</dbReference>
<sequence length="175" mass="19370">MNKTSKVCVAATLALGTLIGVTVVENSAPTSKQAQAAITPYYTYNGYIGNNANFILDKNFINAIKYDNVKFNGIKLAKTNTIKKVEKYDQTFKGVSAKGNEASQLQFVVKNNISLKDIQKAYGKDLKKENGKTKEADSGIFYYQNAKKTLGIWFVVDHNRVVEVTVGHTPYKTSK</sequence>
<reference key="1">
    <citation type="journal article" date="2005" name="J. Bacteriol.">
        <title>Insights on evolution of virulence and resistance from the complete genome analysis of an early methicillin-resistant Staphylococcus aureus strain and a biofilm-producing methicillin-resistant Staphylococcus epidermidis strain.</title>
        <authorList>
            <person name="Gill S.R."/>
            <person name="Fouts D.E."/>
            <person name="Archer G.L."/>
            <person name="Mongodin E.F."/>
            <person name="DeBoy R.T."/>
            <person name="Ravel J."/>
            <person name="Paulsen I.T."/>
            <person name="Kolonay J.F."/>
            <person name="Brinkac L.M."/>
            <person name="Beanan M.J."/>
            <person name="Dodson R.J."/>
            <person name="Daugherty S.C."/>
            <person name="Madupu R."/>
            <person name="Angiuoli S.V."/>
            <person name="Durkin A.S."/>
            <person name="Haft D.H."/>
            <person name="Vamathevan J.J."/>
            <person name="Khouri H."/>
            <person name="Utterback T.R."/>
            <person name="Lee C."/>
            <person name="Dimitrov G."/>
            <person name="Jiang L."/>
            <person name="Qin H."/>
            <person name="Weidman J."/>
            <person name="Tran K."/>
            <person name="Kang K.H."/>
            <person name="Hance I.R."/>
            <person name="Nelson K.E."/>
            <person name="Fraser C.M."/>
        </authorList>
    </citation>
    <scope>NUCLEOTIDE SEQUENCE [LARGE SCALE GENOMIC DNA]</scope>
    <source>
        <strain>COL</strain>
    </source>
</reference>
<accession>Q5HCQ9</accession>
<evidence type="ECO:0000250" key="1"/>
<evidence type="ECO:0000305" key="2"/>
<organism>
    <name type="scientific">Staphylococcus aureus (strain COL)</name>
    <dbReference type="NCBI Taxonomy" id="93062"/>
    <lineage>
        <taxon>Bacteria</taxon>
        <taxon>Bacillati</taxon>
        <taxon>Bacillota</taxon>
        <taxon>Bacilli</taxon>
        <taxon>Bacillales</taxon>
        <taxon>Staphylococcaceae</taxon>
        <taxon>Staphylococcus</taxon>
    </lineage>
</organism>
<protein>
    <recommendedName>
        <fullName>Immunodominant staphylococcal antigen B</fullName>
    </recommendedName>
</protein>
<proteinExistence type="inferred from homology"/>
<comment type="subcellular location">
    <subcellularLocation>
        <location evidence="1">Secreted</location>
    </subcellularLocation>
</comment>
<comment type="similarity">
    <text evidence="2">Belongs to the IsaB family.</text>
</comment>
<keyword id="KW-0964">Secreted</keyword>
<keyword id="KW-0732">Signal</keyword>